<sequence>MSSDIQQIRIGLTNNHPCSYLADRMERVAVAIDPQMQTPETYEVLMANGFRRSGDTIYKPHCDHCQSCQALRIPAPDFVPSKSQKRLLKLLSQEFHWQLKPELDEDWYALYARYIFARHRHGSMYPPNKMEFAKFARAKWLNTQYLHLYQGEKLVAIAVTDLLPNSASAFYTFYDPDISISLGTLAVLCQLNYCQQTKKQWLYLGYQIDECPAMNYKVRFNPHQRLVNQRWRG</sequence>
<accession>A5F7F2</accession>
<accession>C3M1D3</accession>
<reference key="1">
    <citation type="submission" date="2007-03" db="EMBL/GenBank/DDBJ databases">
        <authorList>
            <person name="Heidelberg J."/>
        </authorList>
    </citation>
    <scope>NUCLEOTIDE SEQUENCE [LARGE SCALE GENOMIC DNA]</scope>
    <source>
        <strain>ATCC 39541 / Classical Ogawa 395 / O395</strain>
    </source>
</reference>
<reference key="2">
    <citation type="journal article" date="2008" name="PLoS ONE">
        <title>A recalibrated molecular clock and independent origins for the cholera pandemic clones.</title>
        <authorList>
            <person name="Feng L."/>
            <person name="Reeves P.R."/>
            <person name="Lan R."/>
            <person name="Ren Y."/>
            <person name="Gao C."/>
            <person name="Zhou Z."/>
            <person name="Ren Y."/>
            <person name="Cheng J."/>
            <person name="Wang W."/>
            <person name="Wang J."/>
            <person name="Qian W."/>
            <person name="Li D."/>
            <person name="Wang L."/>
        </authorList>
    </citation>
    <scope>NUCLEOTIDE SEQUENCE [LARGE SCALE GENOMIC DNA]</scope>
    <source>
        <strain>ATCC 39541 / Classical Ogawa 395 / O395</strain>
    </source>
</reference>
<organism>
    <name type="scientific">Vibrio cholerae serotype O1 (strain ATCC 39541 / Classical Ogawa 395 / O395)</name>
    <dbReference type="NCBI Taxonomy" id="345073"/>
    <lineage>
        <taxon>Bacteria</taxon>
        <taxon>Pseudomonadati</taxon>
        <taxon>Pseudomonadota</taxon>
        <taxon>Gammaproteobacteria</taxon>
        <taxon>Vibrionales</taxon>
        <taxon>Vibrionaceae</taxon>
        <taxon>Vibrio</taxon>
    </lineage>
</organism>
<name>BPT_VIBC3</name>
<keyword id="KW-0012">Acyltransferase</keyword>
<keyword id="KW-0963">Cytoplasm</keyword>
<keyword id="KW-0808">Transferase</keyword>
<proteinExistence type="inferred from homology"/>
<feature type="chain" id="PRO_1000072743" description="Aspartate/glutamate leucyltransferase">
    <location>
        <begin position="1"/>
        <end position="233"/>
    </location>
</feature>
<gene>
    <name evidence="1" type="primary">bpt</name>
    <name type="ordered locus">VC0395_A1337</name>
    <name type="ordered locus">VC395_1852</name>
</gene>
<dbReference type="EC" id="2.3.2.29" evidence="1"/>
<dbReference type="EMBL" id="CP000627">
    <property type="protein sequence ID" value="ABQ20460.1"/>
    <property type="molecule type" value="Genomic_DNA"/>
</dbReference>
<dbReference type="EMBL" id="CP001235">
    <property type="protein sequence ID" value="ACP09849.1"/>
    <property type="molecule type" value="Genomic_DNA"/>
</dbReference>
<dbReference type="RefSeq" id="WP_000093313.1">
    <property type="nucleotide sequence ID" value="NZ_JAACZH010000016.1"/>
</dbReference>
<dbReference type="SMR" id="A5F7F2"/>
<dbReference type="KEGG" id="vco:VC0395_A1337"/>
<dbReference type="KEGG" id="vcr:VC395_1852"/>
<dbReference type="PATRIC" id="fig|345073.21.peg.1794"/>
<dbReference type="eggNOG" id="COG2935">
    <property type="taxonomic scope" value="Bacteria"/>
</dbReference>
<dbReference type="HOGENOM" id="CLU_077607_0_0_6"/>
<dbReference type="OrthoDB" id="9782022at2"/>
<dbReference type="Proteomes" id="UP000000249">
    <property type="component" value="Chromosome 2"/>
</dbReference>
<dbReference type="GO" id="GO:0005737">
    <property type="term" value="C:cytoplasm"/>
    <property type="evidence" value="ECO:0007669"/>
    <property type="project" value="UniProtKB-SubCell"/>
</dbReference>
<dbReference type="GO" id="GO:0004057">
    <property type="term" value="F:arginyl-tRNA--protein transferase activity"/>
    <property type="evidence" value="ECO:0007669"/>
    <property type="project" value="InterPro"/>
</dbReference>
<dbReference type="GO" id="GO:0008914">
    <property type="term" value="F:leucyl-tRNA--protein transferase activity"/>
    <property type="evidence" value="ECO:0007669"/>
    <property type="project" value="UniProtKB-UniRule"/>
</dbReference>
<dbReference type="GO" id="GO:0071596">
    <property type="term" value="P:ubiquitin-dependent protein catabolic process via the N-end rule pathway"/>
    <property type="evidence" value="ECO:0007669"/>
    <property type="project" value="InterPro"/>
</dbReference>
<dbReference type="HAMAP" id="MF_00689">
    <property type="entry name" value="Bpt"/>
    <property type="match status" value="1"/>
</dbReference>
<dbReference type="InterPro" id="IPR016181">
    <property type="entry name" value="Acyl_CoA_acyltransferase"/>
</dbReference>
<dbReference type="InterPro" id="IPR017138">
    <property type="entry name" value="Asp_Glu_LeuTrfase"/>
</dbReference>
<dbReference type="InterPro" id="IPR030700">
    <property type="entry name" value="N-end_Aminoacyl_Trfase"/>
</dbReference>
<dbReference type="InterPro" id="IPR007472">
    <property type="entry name" value="N-end_Aminoacyl_Trfase_C"/>
</dbReference>
<dbReference type="InterPro" id="IPR007471">
    <property type="entry name" value="N-end_Aminoacyl_Trfase_N"/>
</dbReference>
<dbReference type="NCBIfam" id="NF002342">
    <property type="entry name" value="PRK01305.1-3"/>
    <property type="match status" value="1"/>
</dbReference>
<dbReference type="NCBIfam" id="NF002345">
    <property type="entry name" value="PRK01305.2-2"/>
    <property type="match status" value="1"/>
</dbReference>
<dbReference type="NCBIfam" id="NF002346">
    <property type="entry name" value="PRK01305.2-3"/>
    <property type="match status" value="1"/>
</dbReference>
<dbReference type="PANTHER" id="PTHR21367">
    <property type="entry name" value="ARGININE-TRNA-PROTEIN TRANSFERASE 1"/>
    <property type="match status" value="1"/>
</dbReference>
<dbReference type="PANTHER" id="PTHR21367:SF1">
    <property type="entry name" value="ARGINYL-TRNA--PROTEIN TRANSFERASE 1"/>
    <property type="match status" value="1"/>
</dbReference>
<dbReference type="Pfam" id="PF04377">
    <property type="entry name" value="ATE_C"/>
    <property type="match status" value="1"/>
</dbReference>
<dbReference type="Pfam" id="PF04376">
    <property type="entry name" value="ATE_N"/>
    <property type="match status" value="1"/>
</dbReference>
<dbReference type="PIRSF" id="PIRSF037208">
    <property type="entry name" value="ATE_pro_prd"/>
    <property type="match status" value="1"/>
</dbReference>
<dbReference type="SUPFAM" id="SSF55729">
    <property type="entry name" value="Acyl-CoA N-acyltransferases (Nat)"/>
    <property type="match status" value="1"/>
</dbReference>
<comment type="function">
    <text evidence="1">Functions in the N-end rule pathway of protein degradation where it conjugates Leu from its aminoacyl-tRNA to the N-termini of proteins containing an N-terminal aspartate or glutamate.</text>
</comment>
<comment type="catalytic activity">
    <reaction evidence="1">
        <text>N-terminal L-glutamyl-[protein] + L-leucyl-tRNA(Leu) = N-terminal L-leucyl-L-glutamyl-[protein] + tRNA(Leu) + H(+)</text>
        <dbReference type="Rhea" id="RHEA:50412"/>
        <dbReference type="Rhea" id="RHEA-COMP:9613"/>
        <dbReference type="Rhea" id="RHEA-COMP:9622"/>
        <dbReference type="Rhea" id="RHEA-COMP:12664"/>
        <dbReference type="Rhea" id="RHEA-COMP:12668"/>
        <dbReference type="ChEBI" id="CHEBI:15378"/>
        <dbReference type="ChEBI" id="CHEBI:64721"/>
        <dbReference type="ChEBI" id="CHEBI:78442"/>
        <dbReference type="ChEBI" id="CHEBI:78494"/>
        <dbReference type="ChEBI" id="CHEBI:133041"/>
        <dbReference type="EC" id="2.3.2.29"/>
    </reaction>
</comment>
<comment type="catalytic activity">
    <reaction evidence="1">
        <text>N-terminal L-aspartyl-[protein] + L-leucyl-tRNA(Leu) = N-terminal L-leucyl-L-aspartyl-[protein] + tRNA(Leu) + H(+)</text>
        <dbReference type="Rhea" id="RHEA:50420"/>
        <dbReference type="Rhea" id="RHEA-COMP:9613"/>
        <dbReference type="Rhea" id="RHEA-COMP:9622"/>
        <dbReference type="Rhea" id="RHEA-COMP:12669"/>
        <dbReference type="Rhea" id="RHEA-COMP:12674"/>
        <dbReference type="ChEBI" id="CHEBI:15378"/>
        <dbReference type="ChEBI" id="CHEBI:64720"/>
        <dbReference type="ChEBI" id="CHEBI:78442"/>
        <dbReference type="ChEBI" id="CHEBI:78494"/>
        <dbReference type="ChEBI" id="CHEBI:133042"/>
        <dbReference type="EC" id="2.3.2.29"/>
    </reaction>
</comment>
<comment type="subcellular location">
    <subcellularLocation>
        <location evidence="1">Cytoplasm</location>
    </subcellularLocation>
</comment>
<comment type="similarity">
    <text evidence="1">Belongs to the R-transferase family. Bpt subfamily.</text>
</comment>
<protein>
    <recommendedName>
        <fullName evidence="1">Aspartate/glutamate leucyltransferase</fullName>
        <ecNumber evidence="1">2.3.2.29</ecNumber>
    </recommendedName>
</protein>
<evidence type="ECO:0000255" key="1">
    <source>
        <dbReference type="HAMAP-Rule" id="MF_00689"/>
    </source>
</evidence>